<organism>
    <name type="scientific">Burkholderia mallei (strain NCTC 10229)</name>
    <dbReference type="NCBI Taxonomy" id="412022"/>
    <lineage>
        <taxon>Bacteria</taxon>
        <taxon>Pseudomonadati</taxon>
        <taxon>Pseudomonadota</taxon>
        <taxon>Betaproteobacteria</taxon>
        <taxon>Burkholderiales</taxon>
        <taxon>Burkholderiaceae</taxon>
        <taxon>Burkholderia</taxon>
        <taxon>pseudomallei group</taxon>
    </lineage>
</organism>
<keyword id="KW-0963">Cytoplasm</keyword>
<keyword id="KW-0350">Heme biosynthesis</keyword>
<keyword id="KW-0479">Metal-binding</keyword>
<keyword id="KW-0560">Oxidoreductase</keyword>
<keyword id="KW-0627">Porphyrin biosynthesis</keyword>
<protein>
    <recommendedName>
        <fullName evidence="1">Oxygen-dependent coproporphyrinogen-III oxidase</fullName>
        <shortName evidence="1">CPO</shortName>
        <shortName evidence="1">Coprogen oxidase</shortName>
        <shortName evidence="1">Coproporphyrinogenase</shortName>
        <ecNumber evidence="1">1.3.3.3</ecNumber>
    </recommendedName>
</protein>
<evidence type="ECO:0000255" key="1">
    <source>
        <dbReference type="HAMAP-Rule" id="MF_00333"/>
    </source>
</evidence>
<accession>A2S4B5</accession>
<reference key="1">
    <citation type="journal article" date="2010" name="Genome Biol. Evol.">
        <title>Continuing evolution of Burkholderia mallei through genome reduction and large-scale rearrangements.</title>
        <authorList>
            <person name="Losada L."/>
            <person name="Ronning C.M."/>
            <person name="DeShazer D."/>
            <person name="Woods D."/>
            <person name="Fedorova N."/>
            <person name="Kim H.S."/>
            <person name="Shabalina S.A."/>
            <person name="Pearson T.R."/>
            <person name="Brinkac L."/>
            <person name="Tan P."/>
            <person name="Nandi T."/>
            <person name="Crabtree J."/>
            <person name="Badger J."/>
            <person name="Beckstrom-Sternberg S."/>
            <person name="Saqib M."/>
            <person name="Schutzer S.E."/>
            <person name="Keim P."/>
            <person name="Nierman W.C."/>
        </authorList>
    </citation>
    <scope>NUCLEOTIDE SEQUENCE [LARGE SCALE GENOMIC DNA]</scope>
    <source>
        <strain>NCTC 10229</strain>
    </source>
</reference>
<name>HEM6_BURM9</name>
<proteinExistence type="inferred from homology"/>
<comment type="function">
    <text evidence="1">Involved in the heme biosynthesis. Catalyzes the aerobic oxidative decarboxylation of propionate groups of rings A and B of coproporphyrinogen-III to yield the vinyl groups in protoporphyrinogen-IX.</text>
</comment>
<comment type="catalytic activity">
    <reaction evidence="1">
        <text>coproporphyrinogen III + O2 + 2 H(+) = protoporphyrinogen IX + 2 CO2 + 2 H2O</text>
        <dbReference type="Rhea" id="RHEA:18257"/>
        <dbReference type="ChEBI" id="CHEBI:15377"/>
        <dbReference type="ChEBI" id="CHEBI:15378"/>
        <dbReference type="ChEBI" id="CHEBI:15379"/>
        <dbReference type="ChEBI" id="CHEBI:16526"/>
        <dbReference type="ChEBI" id="CHEBI:57307"/>
        <dbReference type="ChEBI" id="CHEBI:57309"/>
        <dbReference type="EC" id="1.3.3.3"/>
    </reaction>
</comment>
<comment type="cofactor">
    <cofactor evidence="1">
        <name>a divalent metal cation</name>
        <dbReference type="ChEBI" id="CHEBI:60240"/>
    </cofactor>
</comment>
<comment type="pathway">
    <text evidence="1">Porphyrin-containing compound metabolism; protoporphyrin-IX biosynthesis; protoporphyrinogen-IX from coproporphyrinogen-III (O2 route): step 1/1.</text>
</comment>
<comment type="subunit">
    <text evidence="1">Homodimer.</text>
</comment>
<comment type="subcellular location">
    <subcellularLocation>
        <location evidence="1">Cytoplasm</location>
    </subcellularLocation>
</comment>
<comment type="similarity">
    <text evidence="1">Belongs to the aerobic coproporphyrinogen-III oxidase family.</text>
</comment>
<gene>
    <name evidence="1" type="primary">hemF</name>
    <name type="ordered locus">BMA10229_A0794</name>
</gene>
<dbReference type="EC" id="1.3.3.3" evidence="1"/>
<dbReference type="EMBL" id="CP000546">
    <property type="protein sequence ID" value="ABN03659.1"/>
    <property type="molecule type" value="Genomic_DNA"/>
</dbReference>
<dbReference type="RefSeq" id="WP_004185493.1">
    <property type="nucleotide sequence ID" value="NC_008836.1"/>
</dbReference>
<dbReference type="SMR" id="A2S4B5"/>
<dbReference type="GeneID" id="92979597"/>
<dbReference type="KEGG" id="bml:BMA10229_A0794"/>
<dbReference type="HOGENOM" id="CLU_026169_0_1_4"/>
<dbReference type="UniPathway" id="UPA00251">
    <property type="reaction ID" value="UER00322"/>
</dbReference>
<dbReference type="Proteomes" id="UP000002283">
    <property type="component" value="Chromosome I"/>
</dbReference>
<dbReference type="GO" id="GO:0005737">
    <property type="term" value="C:cytoplasm"/>
    <property type="evidence" value="ECO:0007669"/>
    <property type="project" value="UniProtKB-SubCell"/>
</dbReference>
<dbReference type="GO" id="GO:0004109">
    <property type="term" value="F:coproporphyrinogen oxidase activity"/>
    <property type="evidence" value="ECO:0007669"/>
    <property type="project" value="UniProtKB-UniRule"/>
</dbReference>
<dbReference type="GO" id="GO:0046872">
    <property type="term" value="F:metal ion binding"/>
    <property type="evidence" value="ECO:0007669"/>
    <property type="project" value="UniProtKB-KW"/>
</dbReference>
<dbReference type="GO" id="GO:0042803">
    <property type="term" value="F:protein homodimerization activity"/>
    <property type="evidence" value="ECO:0000250"/>
    <property type="project" value="UniProtKB"/>
</dbReference>
<dbReference type="GO" id="GO:0006782">
    <property type="term" value="P:protoporphyrinogen IX biosynthetic process"/>
    <property type="evidence" value="ECO:0007669"/>
    <property type="project" value="UniProtKB-UniRule"/>
</dbReference>
<dbReference type="FunFam" id="3.40.1500.10:FF:000001">
    <property type="entry name" value="Oxygen-dependent coproporphyrinogen-III oxidase"/>
    <property type="match status" value="1"/>
</dbReference>
<dbReference type="Gene3D" id="3.40.1500.10">
    <property type="entry name" value="Coproporphyrinogen III oxidase, aerobic"/>
    <property type="match status" value="1"/>
</dbReference>
<dbReference type="HAMAP" id="MF_00333">
    <property type="entry name" value="Coprogen_oxidas"/>
    <property type="match status" value="1"/>
</dbReference>
<dbReference type="InterPro" id="IPR001260">
    <property type="entry name" value="Coprogen_oxidase_aer"/>
</dbReference>
<dbReference type="InterPro" id="IPR036406">
    <property type="entry name" value="Coprogen_oxidase_aer_sf"/>
</dbReference>
<dbReference type="InterPro" id="IPR018375">
    <property type="entry name" value="Coprogen_oxidase_CS"/>
</dbReference>
<dbReference type="NCBIfam" id="NF003727">
    <property type="entry name" value="PRK05330.1"/>
    <property type="match status" value="1"/>
</dbReference>
<dbReference type="PANTHER" id="PTHR10755">
    <property type="entry name" value="COPROPORPHYRINOGEN III OXIDASE, MITOCHONDRIAL"/>
    <property type="match status" value="1"/>
</dbReference>
<dbReference type="PANTHER" id="PTHR10755:SF0">
    <property type="entry name" value="OXYGEN-DEPENDENT COPROPORPHYRINOGEN-III OXIDASE, MITOCHONDRIAL"/>
    <property type="match status" value="1"/>
</dbReference>
<dbReference type="Pfam" id="PF01218">
    <property type="entry name" value="Coprogen_oxidas"/>
    <property type="match status" value="1"/>
</dbReference>
<dbReference type="PIRSF" id="PIRSF000166">
    <property type="entry name" value="Coproporphyri_ox"/>
    <property type="match status" value="1"/>
</dbReference>
<dbReference type="PRINTS" id="PR00073">
    <property type="entry name" value="COPRGNOXDASE"/>
</dbReference>
<dbReference type="SUPFAM" id="SSF102886">
    <property type="entry name" value="Coproporphyrinogen III oxidase"/>
    <property type="match status" value="1"/>
</dbReference>
<dbReference type="PROSITE" id="PS01021">
    <property type="entry name" value="COPROGEN_OXIDASE"/>
    <property type="match status" value="1"/>
</dbReference>
<feature type="chain" id="PRO_1000019459" description="Oxygen-dependent coproporphyrinogen-III oxidase">
    <location>
        <begin position="1"/>
        <end position="307"/>
    </location>
</feature>
<feature type="region of interest" description="Important for dimerization" evidence="1">
    <location>
        <begin position="247"/>
        <end position="282"/>
    </location>
</feature>
<feature type="active site" description="Proton donor" evidence="1">
    <location>
        <position position="113"/>
    </location>
</feature>
<feature type="binding site" evidence="1">
    <location>
        <position position="99"/>
    </location>
    <ligand>
        <name>substrate</name>
    </ligand>
</feature>
<feature type="binding site" evidence="1">
    <location>
        <position position="103"/>
    </location>
    <ligand>
        <name>a divalent metal cation</name>
        <dbReference type="ChEBI" id="CHEBI:60240"/>
    </ligand>
</feature>
<feature type="binding site" evidence="1">
    <location>
        <position position="113"/>
    </location>
    <ligand>
        <name>a divalent metal cation</name>
        <dbReference type="ChEBI" id="CHEBI:60240"/>
    </ligand>
</feature>
<feature type="binding site" evidence="1">
    <location>
        <begin position="115"/>
        <end position="117"/>
    </location>
    <ligand>
        <name>substrate</name>
    </ligand>
</feature>
<feature type="binding site" evidence="1">
    <location>
        <position position="152"/>
    </location>
    <ligand>
        <name>a divalent metal cation</name>
        <dbReference type="ChEBI" id="CHEBI:60240"/>
    </ligand>
</feature>
<feature type="binding site" evidence="1">
    <location>
        <position position="182"/>
    </location>
    <ligand>
        <name>a divalent metal cation</name>
        <dbReference type="ChEBI" id="CHEBI:60240"/>
    </ligand>
</feature>
<feature type="binding site" evidence="1">
    <location>
        <begin position="265"/>
        <end position="267"/>
    </location>
    <ligand>
        <name>substrate</name>
    </ligand>
</feature>
<feature type="site" description="Important for dimerization" evidence="1">
    <location>
        <position position="182"/>
    </location>
</feature>
<sequence length="307" mass="34596">MTDSTYDVNRVRAYLQGLQMRIADALGAFDGTPLAADTWRRGPGERLRGGGCTRILEAGGFFERAGIGFSDVAGDALPPSANASRPQLAGRGFEALGVSLVLHPRNPYCPTVHMNVRMLIATKPGEAPVFWFGGGMDLTPIYGFEEDARHFHRTCRAALEPFGAELYPRFKKWCDDYFFLKHRNEARGIGGIFFDDFSELGFERSFEMLQSVGDAFLPSYLPIVERRRDTPYGERERAFQAYRRGRYVEFNLVFDRGTLFGLQSGGRTESILLSMPPTAGWRYDWHPDPGTPEARLQSEFLVPRDWA</sequence>